<organism>
    <name type="scientific">Schizosaccharomyces pombe (strain 972 / ATCC 24843)</name>
    <name type="common">Fission yeast</name>
    <dbReference type="NCBI Taxonomy" id="284812"/>
    <lineage>
        <taxon>Eukaryota</taxon>
        <taxon>Fungi</taxon>
        <taxon>Dikarya</taxon>
        <taxon>Ascomycota</taxon>
        <taxon>Taphrinomycotina</taxon>
        <taxon>Schizosaccharomycetes</taxon>
        <taxon>Schizosaccharomycetales</taxon>
        <taxon>Schizosaccharomycetaceae</taxon>
        <taxon>Schizosaccharomyces</taxon>
    </lineage>
</organism>
<sequence length="213" mass="24238">MLYRLSEKQQTDLRCNKLTVDGFELVKMLKELRLHNRNINFLEFLRGVQIVPSDSVFLGEIDENSHTQDNTTTSILKEKELYDGIPLLPSMAGVSMDPEREKKSELRLMKNQISAIINILFTVVGTVTAVWYCTSSLSIEKKIALCAFSAILVLVADTFLYVRYLSAQPVRTSKNHTRQIIYTWTTNDPVLQSNEQLAIELGAIPSLKEKKNQ</sequence>
<dbReference type="EMBL" id="CU329672">
    <property type="protein sequence ID" value="CAA21235.2"/>
    <property type="molecule type" value="Genomic_DNA"/>
</dbReference>
<dbReference type="PIR" id="T41601">
    <property type="entry name" value="T41601"/>
</dbReference>
<dbReference type="RefSeq" id="NP_587685.2">
    <property type="nucleotide sequence ID" value="NM_001022680.2"/>
</dbReference>
<dbReference type="BioGRID" id="275859">
    <property type="interactions" value="357"/>
</dbReference>
<dbReference type="FunCoup" id="O74920">
    <property type="interactions" value="134"/>
</dbReference>
<dbReference type="STRING" id="284812.O74920"/>
<dbReference type="iPTMnet" id="O74920"/>
<dbReference type="PaxDb" id="4896-SPCC757.10.1"/>
<dbReference type="EnsemblFungi" id="SPCC757.10.1">
    <property type="protein sequence ID" value="SPCC757.10.1:pep"/>
    <property type="gene ID" value="SPCC757.10"/>
</dbReference>
<dbReference type="GeneID" id="2539291"/>
<dbReference type="KEGG" id="spo:2539291"/>
<dbReference type="PomBase" id="SPCC757.10">
    <property type="gene designation" value="vph2"/>
</dbReference>
<dbReference type="VEuPathDB" id="FungiDB:SPCC757.10"/>
<dbReference type="eggNOG" id="ENOG502REUZ">
    <property type="taxonomic scope" value="Eukaryota"/>
</dbReference>
<dbReference type="HOGENOM" id="CLU_1295072_0_0_1"/>
<dbReference type="InParanoid" id="O74920"/>
<dbReference type="OMA" id="AVWYCTS"/>
<dbReference type="PRO" id="PR:O74920"/>
<dbReference type="Proteomes" id="UP000002485">
    <property type="component" value="Chromosome III"/>
</dbReference>
<dbReference type="GO" id="GO:0012505">
    <property type="term" value="C:endomembrane system"/>
    <property type="evidence" value="ECO:0000318"/>
    <property type="project" value="GO_Central"/>
</dbReference>
<dbReference type="GO" id="GO:0005783">
    <property type="term" value="C:endoplasmic reticulum"/>
    <property type="evidence" value="ECO:0007005"/>
    <property type="project" value="PomBase"/>
</dbReference>
<dbReference type="GO" id="GO:0005789">
    <property type="term" value="C:endoplasmic reticulum membrane"/>
    <property type="evidence" value="ECO:0000266"/>
    <property type="project" value="PomBase"/>
</dbReference>
<dbReference type="GO" id="GO:0070072">
    <property type="term" value="P:vacuolar proton-transporting V-type ATPase complex assembly"/>
    <property type="evidence" value="ECO:0000266"/>
    <property type="project" value="PomBase"/>
</dbReference>
<dbReference type="InterPro" id="IPR021013">
    <property type="entry name" value="ATPase_Vma12"/>
</dbReference>
<dbReference type="PANTHER" id="PTHR31394">
    <property type="entry name" value="TRANSMEMBRANE PROTEIN 199"/>
    <property type="match status" value="1"/>
</dbReference>
<dbReference type="PANTHER" id="PTHR31394:SF1">
    <property type="entry name" value="TRANSMEMBRANE PROTEIN 199"/>
    <property type="match status" value="1"/>
</dbReference>
<dbReference type="Pfam" id="PF11712">
    <property type="entry name" value="Vma12"/>
    <property type="match status" value="1"/>
</dbReference>
<proteinExistence type="inferred from homology"/>
<keyword id="KW-0256">Endoplasmic reticulum</keyword>
<keyword id="KW-0472">Membrane</keyword>
<keyword id="KW-1185">Reference proteome</keyword>
<keyword id="KW-0812">Transmembrane</keyword>
<keyword id="KW-1133">Transmembrane helix</keyword>
<gene>
    <name type="primary">vph2</name>
    <name type="ORF">SPCC757.10</name>
</gene>
<feature type="chain" id="PRO_0000065873" description="Vacuolar ATPase assembly integral membrane protein vph2">
    <location>
        <begin position="1"/>
        <end position="213"/>
    </location>
</feature>
<feature type="transmembrane region" description="Helical" evidence="2">
    <location>
        <begin position="113"/>
        <end position="133"/>
    </location>
</feature>
<feature type="transmembrane region" description="Helical" evidence="2">
    <location>
        <begin position="142"/>
        <end position="162"/>
    </location>
</feature>
<protein>
    <recommendedName>
        <fullName>Vacuolar ATPase assembly integral membrane protein vph2</fullName>
    </recommendedName>
</protein>
<name>VPH2_SCHPO</name>
<evidence type="ECO:0000250" key="1"/>
<evidence type="ECO:0000255" key="2"/>
<evidence type="ECO:0000269" key="3">
    <source>
    </source>
</evidence>
<accession>O74920</accession>
<reference key="1">
    <citation type="journal article" date="2002" name="Nature">
        <title>The genome sequence of Schizosaccharomyces pombe.</title>
        <authorList>
            <person name="Wood V."/>
            <person name="Gwilliam R."/>
            <person name="Rajandream M.A."/>
            <person name="Lyne M.H."/>
            <person name="Lyne R."/>
            <person name="Stewart A."/>
            <person name="Sgouros J.G."/>
            <person name="Peat N."/>
            <person name="Hayles J."/>
            <person name="Baker S.G."/>
            <person name="Basham D."/>
            <person name="Bowman S."/>
            <person name="Brooks K."/>
            <person name="Brown D."/>
            <person name="Brown S."/>
            <person name="Chillingworth T."/>
            <person name="Churcher C.M."/>
            <person name="Collins M."/>
            <person name="Connor R."/>
            <person name="Cronin A."/>
            <person name="Davis P."/>
            <person name="Feltwell T."/>
            <person name="Fraser A."/>
            <person name="Gentles S."/>
            <person name="Goble A."/>
            <person name="Hamlin N."/>
            <person name="Harris D.E."/>
            <person name="Hidalgo J."/>
            <person name="Hodgson G."/>
            <person name="Holroyd S."/>
            <person name="Hornsby T."/>
            <person name="Howarth S."/>
            <person name="Huckle E.J."/>
            <person name="Hunt S."/>
            <person name="Jagels K."/>
            <person name="James K.D."/>
            <person name="Jones L."/>
            <person name="Jones M."/>
            <person name="Leather S."/>
            <person name="McDonald S."/>
            <person name="McLean J."/>
            <person name="Mooney P."/>
            <person name="Moule S."/>
            <person name="Mungall K.L."/>
            <person name="Murphy L.D."/>
            <person name="Niblett D."/>
            <person name="Odell C."/>
            <person name="Oliver K."/>
            <person name="O'Neil S."/>
            <person name="Pearson D."/>
            <person name="Quail M.A."/>
            <person name="Rabbinowitsch E."/>
            <person name="Rutherford K.M."/>
            <person name="Rutter S."/>
            <person name="Saunders D."/>
            <person name="Seeger K."/>
            <person name="Sharp S."/>
            <person name="Skelton J."/>
            <person name="Simmonds M.N."/>
            <person name="Squares R."/>
            <person name="Squares S."/>
            <person name="Stevens K."/>
            <person name="Taylor K."/>
            <person name="Taylor R.G."/>
            <person name="Tivey A."/>
            <person name="Walsh S.V."/>
            <person name="Warren T."/>
            <person name="Whitehead S."/>
            <person name="Woodward J.R."/>
            <person name="Volckaert G."/>
            <person name="Aert R."/>
            <person name="Robben J."/>
            <person name="Grymonprez B."/>
            <person name="Weltjens I."/>
            <person name="Vanstreels E."/>
            <person name="Rieger M."/>
            <person name="Schaefer M."/>
            <person name="Mueller-Auer S."/>
            <person name="Gabel C."/>
            <person name="Fuchs M."/>
            <person name="Duesterhoeft A."/>
            <person name="Fritzc C."/>
            <person name="Holzer E."/>
            <person name="Moestl D."/>
            <person name="Hilbert H."/>
            <person name="Borzym K."/>
            <person name="Langer I."/>
            <person name="Beck A."/>
            <person name="Lehrach H."/>
            <person name="Reinhardt R."/>
            <person name="Pohl T.M."/>
            <person name="Eger P."/>
            <person name="Zimmermann W."/>
            <person name="Wedler H."/>
            <person name="Wambutt R."/>
            <person name="Purnelle B."/>
            <person name="Goffeau A."/>
            <person name="Cadieu E."/>
            <person name="Dreano S."/>
            <person name="Gloux S."/>
            <person name="Lelaure V."/>
            <person name="Mottier S."/>
            <person name="Galibert F."/>
            <person name="Aves S.J."/>
            <person name="Xiang Z."/>
            <person name="Hunt C."/>
            <person name="Moore K."/>
            <person name="Hurst S.M."/>
            <person name="Lucas M."/>
            <person name="Rochet M."/>
            <person name="Gaillardin C."/>
            <person name="Tallada V.A."/>
            <person name="Garzon A."/>
            <person name="Thode G."/>
            <person name="Daga R.R."/>
            <person name="Cruzado L."/>
            <person name="Jimenez J."/>
            <person name="Sanchez M."/>
            <person name="del Rey F."/>
            <person name="Benito J."/>
            <person name="Dominguez A."/>
            <person name="Revuelta J.L."/>
            <person name="Moreno S."/>
            <person name="Armstrong J."/>
            <person name="Forsburg S.L."/>
            <person name="Cerutti L."/>
            <person name="Lowe T."/>
            <person name="McCombie W.R."/>
            <person name="Paulsen I."/>
            <person name="Potashkin J."/>
            <person name="Shpakovski G.V."/>
            <person name="Ussery D."/>
            <person name="Barrell B.G."/>
            <person name="Nurse P."/>
        </authorList>
    </citation>
    <scope>NUCLEOTIDE SEQUENCE [LARGE SCALE GENOMIC DNA]</scope>
    <source>
        <strain>972 / ATCC 24843</strain>
    </source>
</reference>
<reference key="2">
    <citation type="journal article" date="2011" name="Science">
        <title>Comparative functional genomics of the fission yeasts.</title>
        <authorList>
            <person name="Rhind N."/>
            <person name="Chen Z."/>
            <person name="Yassour M."/>
            <person name="Thompson D.A."/>
            <person name="Haas B.J."/>
            <person name="Habib N."/>
            <person name="Wapinski I."/>
            <person name="Roy S."/>
            <person name="Lin M.F."/>
            <person name="Heiman D.I."/>
            <person name="Young S.K."/>
            <person name="Furuya K."/>
            <person name="Guo Y."/>
            <person name="Pidoux A."/>
            <person name="Chen H.M."/>
            <person name="Robbertse B."/>
            <person name="Goldberg J.M."/>
            <person name="Aoki K."/>
            <person name="Bayne E.H."/>
            <person name="Berlin A.M."/>
            <person name="Desjardins C.A."/>
            <person name="Dobbs E."/>
            <person name="Dukaj L."/>
            <person name="Fan L."/>
            <person name="FitzGerald M.G."/>
            <person name="French C."/>
            <person name="Gujja S."/>
            <person name="Hansen K."/>
            <person name="Keifenheim D."/>
            <person name="Levin J.Z."/>
            <person name="Mosher R.A."/>
            <person name="Mueller C.A."/>
            <person name="Pfiffner J."/>
            <person name="Priest M."/>
            <person name="Russ C."/>
            <person name="Smialowska A."/>
            <person name="Swoboda P."/>
            <person name="Sykes S.M."/>
            <person name="Vaughn M."/>
            <person name="Vengrova S."/>
            <person name="Yoder R."/>
            <person name="Zeng Q."/>
            <person name="Allshire R."/>
            <person name="Baulcombe D."/>
            <person name="Birren B.W."/>
            <person name="Brown W."/>
            <person name="Ekwall K."/>
            <person name="Kellis M."/>
            <person name="Leatherwood J."/>
            <person name="Levin H."/>
            <person name="Margalit H."/>
            <person name="Martienssen R."/>
            <person name="Nieduszynski C.A."/>
            <person name="Spatafora J.W."/>
            <person name="Friedman N."/>
            <person name="Dalgaard J.Z."/>
            <person name="Baumann P."/>
            <person name="Niki H."/>
            <person name="Regev A."/>
            <person name="Nusbaum C."/>
        </authorList>
    </citation>
    <scope>REVISION OF GENE MODEL</scope>
</reference>
<reference key="3">
    <citation type="journal article" date="2006" name="Nat. Biotechnol.">
        <title>ORFeome cloning and global analysis of protein localization in the fission yeast Schizosaccharomyces pombe.</title>
        <authorList>
            <person name="Matsuyama A."/>
            <person name="Arai R."/>
            <person name="Yashiroda Y."/>
            <person name="Shirai A."/>
            <person name="Kamata A."/>
            <person name="Sekido S."/>
            <person name="Kobayashi Y."/>
            <person name="Hashimoto A."/>
            <person name="Hamamoto M."/>
            <person name="Hiraoka Y."/>
            <person name="Horinouchi S."/>
            <person name="Yoshida M."/>
        </authorList>
    </citation>
    <scope>SUBCELLULAR LOCATION [LARGE SCALE ANALYSIS]</scope>
</reference>
<comment type="function">
    <text evidence="1">Required for vacuolar ATPase assembly.</text>
</comment>
<comment type="subcellular location">
    <subcellularLocation>
        <location evidence="3">Endoplasmic reticulum membrane</location>
        <topology evidence="3">Multi-pass membrane protein</topology>
    </subcellularLocation>
</comment>